<accession>O46516</accession>
<accession>P79437</accession>
<feature type="chain" id="PRO_0000087773" description="3 beta-hydroxysteroid dehydrogenase/Delta 5--&gt;4-isomerase">
    <location>
        <begin position="1"/>
        <end position="373"/>
    </location>
</feature>
<feature type="transmembrane region" description="Helical" evidence="2">
    <location>
        <begin position="288"/>
        <end position="308"/>
    </location>
</feature>
<feature type="active site" description="Proton acceptor" evidence="1">
    <location>
        <position position="155"/>
    </location>
</feature>
<feature type="binding site" evidence="1">
    <location>
        <position position="159"/>
    </location>
    <ligand>
        <name>NAD(+)</name>
        <dbReference type="ChEBI" id="CHEBI:57540"/>
    </ligand>
</feature>
<reference key="1">
    <citation type="journal article" date="2001" name="Biol. Reprod.">
        <title>Equine P450 cholesterol side-chain cleavage and 3 beta-hydroxysteroid dehydrogenase/delta(5)-delta(4) isomerase: molecular cloning and regulation of their messenger ribonucleic acids in equine follicles during the ovulatory process.</title>
        <authorList>
            <person name="Boerboom D."/>
            <person name="Sirois J."/>
        </authorList>
    </citation>
    <scope>NUCLEOTIDE SEQUENCE [MRNA]</scope>
    <source>
        <tissue>Ovarian follicle membrane</tissue>
    </source>
</reference>
<reference key="2">
    <citation type="journal article" date="1998" name="J. Equine Sci.">
        <title>Molecular cloning, nucleotide sequence and tissue distribution of equine testicular 3 beta-hydroxysteroid dehydrogenase/delta5-delta4 isomerase messenger ribonucleic acid.</title>
        <authorList>
            <person name="Hasegawa T."/>
            <person name="Ishida M."/>
            <person name="Harigaya T."/>
            <person name="Ishida N."/>
            <person name="Mukoyama H."/>
        </authorList>
    </citation>
    <scope>NUCLEOTIDE SEQUENCE [MRNA]</scope>
</reference>
<sequence length="373" mass="42411">MAGWSCLVTGAGGFLGQRIVRLLVEEKEVQEIRALDKVFRPELREEFSKLQSKVKLTVLEGDILDEQFLKRACQGASAVIHTASIIDVTNLFNPQVTMNVNVEGTQLLLEACSQASVPIFIYTSSVAVAGPNSYREIIQNGHEEAHLETKWSSPYPYSKKLAEKAVLAANGLPLKNGGTLYTCALRPMFIYGEGSPTLYYLMHEGLNNNGILTHNCKFSRANPVYVGNIAWAHIMALRALRDPKKAPSIQGQFYYISDDTPPQSYDDLTYTLSKKWGFCLDSRMRLPIFLKYWLAFLLEIVSFLLSPIYKYRPPFDRHLVTWQNSVFTFSYKKAQRDMGYEPLFSWEEAKKRTTEWIDALVEPHQEALKTKTL</sequence>
<keyword id="KW-0256">Endoplasmic reticulum</keyword>
<keyword id="KW-0413">Isomerase</keyword>
<keyword id="KW-0472">Membrane</keyword>
<keyword id="KW-0496">Mitochondrion</keyword>
<keyword id="KW-0511">Multifunctional enzyme</keyword>
<keyword id="KW-0520">NAD</keyword>
<keyword id="KW-0560">Oxidoreductase</keyword>
<keyword id="KW-1185">Reference proteome</keyword>
<keyword id="KW-0755">Steroidogenesis</keyword>
<keyword id="KW-0812">Transmembrane</keyword>
<keyword id="KW-1133">Transmembrane helix</keyword>
<comment type="function">
    <text>3-beta-HSD is a bifunctional enzyme, that catalyzes the oxidative conversion of Delta(5)-ene-3-beta-hydroxy steroid, and the oxidative conversion of ketosteroids. The 3-beta-HSD enzymatic system plays a crucial role in the biosynthesis of all classes of hormonal steroids.</text>
</comment>
<comment type="catalytic activity">
    <reaction>
        <text>a 3beta-hydroxy-Delta(5)-steroid + NAD(+) = a 3-oxo-Delta(5)-steroid + NADH + H(+)</text>
        <dbReference type="Rhea" id="RHEA:24076"/>
        <dbReference type="ChEBI" id="CHEBI:1722"/>
        <dbReference type="ChEBI" id="CHEBI:15378"/>
        <dbReference type="ChEBI" id="CHEBI:47907"/>
        <dbReference type="ChEBI" id="CHEBI:57540"/>
        <dbReference type="ChEBI" id="CHEBI:57945"/>
        <dbReference type="EC" id="1.1.1.145"/>
    </reaction>
</comment>
<comment type="catalytic activity">
    <reaction>
        <text>a 3-oxo-Delta(5)-steroid = a 3-oxo-Delta(4)-steroid</text>
        <dbReference type="Rhea" id="RHEA:14709"/>
        <dbReference type="ChEBI" id="CHEBI:47907"/>
        <dbReference type="ChEBI" id="CHEBI:47909"/>
        <dbReference type="EC" id="5.3.3.1"/>
    </reaction>
</comment>
<comment type="pathway">
    <text>Lipid metabolism; steroid biosynthesis.</text>
</comment>
<comment type="subcellular location">
    <subcellularLocation>
        <location>Endoplasmic reticulum membrane</location>
        <topology>Single-pass membrane protein</topology>
    </subcellularLocation>
    <subcellularLocation>
        <location>Mitochondrion membrane</location>
        <topology>Single-pass membrane protein</topology>
    </subcellularLocation>
</comment>
<comment type="similarity">
    <text evidence="3">Belongs to the 3-beta-HSD family.</text>
</comment>
<protein>
    <recommendedName>
        <fullName>3 beta-hydroxysteroid dehydrogenase/Delta 5--&gt;4-isomerase</fullName>
        <shortName>3-beta-HSD</shortName>
    </recommendedName>
    <domain>
        <recommendedName>
            <fullName>3-beta-hydroxy-Delta(5)-steroid dehydrogenase</fullName>
            <ecNumber>1.1.1.145</ecNumber>
        </recommendedName>
        <alternativeName>
            <fullName>3-beta-hydroxy-5-ene steroid dehydrogenase</fullName>
        </alternativeName>
        <alternativeName>
            <fullName>Progesterone reductase</fullName>
        </alternativeName>
    </domain>
    <domain>
        <recommendedName>
            <fullName>Steroid Delta-isomerase</fullName>
            <ecNumber>5.3.3.1</ecNumber>
        </recommendedName>
        <alternativeName>
            <fullName>Delta-5-3-ketosteroid isomerase</fullName>
        </alternativeName>
    </domain>
</protein>
<gene>
    <name type="primary">HSD3B</name>
</gene>
<proteinExistence type="evidence at transcript level"/>
<evidence type="ECO:0000250" key="1"/>
<evidence type="ECO:0000255" key="2"/>
<evidence type="ECO:0000305" key="3"/>
<name>3BHS_HORSE</name>
<dbReference type="EC" id="1.1.1.145"/>
<dbReference type="EC" id="5.3.3.1"/>
<dbReference type="EMBL" id="AF031665">
    <property type="protein sequence ID" value="AAC04701.1"/>
    <property type="molecule type" value="mRNA"/>
</dbReference>
<dbReference type="EMBL" id="D89666">
    <property type="protein sequence ID" value="BAA32698.1"/>
    <property type="molecule type" value="mRNA"/>
</dbReference>
<dbReference type="RefSeq" id="NP_001075380.1">
    <property type="nucleotide sequence ID" value="NM_001081911.1"/>
</dbReference>
<dbReference type="RefSeq" id="NP_001295566.1">
    <property type="nucleotide sequence ID" value="NM_001308637.1"/>
</dbReference>
<dbReference type="SMR" id="O46516"/>
<dbReference type="FunCoup" id="O46516">
    <property type="interactions" value="33"/>
</dbReference>
<dbReference type="STRING" id="9796.ENSECAP00000028931"/>
<dbReference type="PaxDb" id="9796-ENSECAP00000028931"/>
<dbReference type="Ensembl" id="ENSECAT00000015327.2">
    <property type="protein sequence ID" value="ENSECAP00000012310.2"/>
    <property type="gene ID" value="ENSECAG00000014483.4"/>
</dbReference>
<dbReference type="GeneID" id="100034078"/>
<dbReference type="KEGG" id="ecb:100034078"/>
<dbReference type="CTD" id="3284"/>
<dbReference type="GeneTree" id="ENSGT00940000155444"/>
<dbReference type="HOGENOM" id="CLU_007383_6_3_1"/>
<dbReference type="InParanoid" id="O46516"/>
<dbReference type="OrthoDB" id="1925334at2759"/>
<dbReference type="UniPathway" id="UPA00062"/>
<dbReference type="Proteomes" id="UP000002281">
    <property type="component" value="Chromosome 5"/>
</dbReference>
<dbReference type="Bgee" id="ENSECAG00000014483">
    <property type="expression patterns" value="Expressed in chorionic villus and 12 other cell types or tissues"/>
</dbReference>
<dbReference type="ExpressionAtlas" id="O46516">
    <property type="expression patterns" value="baseline"/>
</dbReference>
<dbReference type="GO" id="GO:0005737">
    <property type="term" value="C:cytoplasm"/>
    <property type="evidence" value="ECO:0000318"/>
    <property type="project" value="GO_Central"/>
</dbReference>
<dbReference type="GO" id="GO:0005789">
    <property type="term" value="C:endoplasmic reticulum membrane"/>
    <property type="evidence" value="ECO:0007669"/>
    <property type="project" value="UniProtKB-SubCell"/>
</dbReference>
<dbReference type="GO" id="GO:0043231">
    <property type="term" value="C:intracellular membrane-bounded organelle"/>
    <property type="evidence" value="ECO:0000318"/>
    <property type="project" value="GO_Central"/>
</dbReference>
<dbReference type="GO" id="GO:0031966">
    <property type="term" value="C:mitochondrial membrane"/>
    <property type="evidence" value="ECO:0007669"/>
    <property type="project" value="UniProtKB-SubCell"/>
</dbReference>
<dbReference type="GO" id="GO:0003854">
    <property type="term" value="F:3-beta-hydroxy-Delta5-steroid dehydrogenase (NAD+) activity"/>
    <property type="evidence" value="ECO:0007669"/>
    <property type="project" value="UniProtKB-EC"/>
</dbReference>
<dbReference type="GO" id="GO:0016616">
    <property type="term" value="F:oxidoreductase activity, acting on the CH-OH group of donors, NAD or NADP as acceptor"/>
    <property type="evidence" value="ECO:0000318"/>
    <property type="project" value="GO_Central"/>
</dbReference>
<dbReference type="GO" id="GO:0004769">
    <property type="term" value="F:steroid Delta-isomerase activity"/>
    <property type="evidence" value="ECO:0007669"/>
    <property type="project" value="UniProtKB-EC"/>
</dbReference>
<dbReference type="GO" id="GO:0008207">
    <property type="term" value="P:C21-steroid hormone metabolic process"/>
    <property type="evidence" value="ECO:0000318"/>
    <property type="project" value="GO_Central"/>
</dbReference>
<dbReference type="GO" id="GO:0006694">
    <property type="term" value="P:steroid biosynthetic process"/>
    <property type="evidence" value="ECO:0000318"/>
    <property type="project" value="GO_Central"/>
</dbReference>
<dbReference type="FunFam" id="3.40.50.720:FF:000220">
    <property type="entry name" value="3 beta-hydroxysteroid dehydrogenase/Delta 5--&gt;4-isomerase type 1"/>
    <property type="match status" value="1"/>
</dbReference>
<dbReference type="Gene3D" id="3.40.50.720">
    <property type="entry name" value="NAD(P)-binding Rossmann-like Domain"/>
    <property type="match status" value="1"/>
</dbReference>
<dbReference type="InterPro" id="IPR002225">
    <property type="entry name" value="3Beta_OHSteriod_DH/Estase"/>
</dbReference>
<dbReference type="InterPro" id="IPR050177">
    <property type="entry name" value="Lipid_A_modif_metabolic_enz"/>
</dbReference>
<dbReference type="InterPro" id="IPR036291">
    <property type="entry name" value="NAD(P)-bd_dom_sf"/>
</dbReference>
<dbReference type="PANTHER" id="PTHR43245">
    <property type="entry name" value="BIFUNCTIONAL POLYMYXIN RESISTANCE PROTEIN ARNA"/>
    <property type="match status" value="1"/>
</dbReference>
<dbReference type="PANTHER" id="PTHR43245:SF51">
    <property type="entry name" value="SHORT CHAIN DEHYDROGENASE_REDUCTASE FAMILY 42E, MEMBER 2"/>
    <property type="match status" value="1"/>
</dbReference>
<dbReference type="Pfam" id="PF01073">
    <property type="entry name" value="3Beta_HSD"/>
    <property type="match status" value="1"/>
</dbReference>
<dbReference type="SUPFAM" id="SSF51735">
    <property type="entry name" value="NAD(P)-binding Rossmann-fold domains"/>
    <property type="match status" value="1"/>
</dbReference>
<organism>
    <name type="scientific">Equus caballus</name>
    <name type="common">Horse</name>
    <dbReference type="NCBI Taxonomy" id="9796"/>
    <lineage>
        <taxon>Eukaryota</taxon>
        <taxon>Metazoa</taxon>
        <taxon>Chordata</taxon>
        <taxon>Craniata</taxon>
        <taxon>Vertebrata</taxon>
        <taxon>Euteleostomi</taxon>
        <taxon>Mammalia</taxon>
        <taxon>Eutheria</taxon>
        <taxon>Laurasiatheria</taxon>
        <taxon>Perissodactyla</taxon>
        <taxon>Equidae</taxon>
        <taxon>Equus</taxon>
    </lineage>
</organism>